<reference key="1">
    <citation type="journal article" date="2009" name="PLoS Genet.">
        <title>Organised genome dynamics in the Escherichia coli species results in highly diverse adaptive paths.</title>
        <authorList>
            <person name="Touchon M."/>
            <person name="Hoede C."/>
            <person name="Tenaillon O."/>
            <person name="Barbe V."/>
            <person name="Baeriswyl S."/>
            <person name="Bidet P."/>
            <person name="Bingen E."/>
            <person name="Bonacorsi S."/>
            <person name="Bouchier C."/>
            <person name="Bouvet O."/>
            <person name="Calteau A."/>
            <person name="Chiapello H."/>
            <person name="Clermont O."/>
            <person name="Cruveiller S."/>
            <person name="Danchin A."/>
            <person name="Diard M."/>
            <person name="Dossat C."/>
            <person name="Karoui M.E."/>
            <person name="Frapy E."/>
            <person name="Garry L."/>
            <person name="Ghigo J.M."/>
            <person name="Gilles A.M."/>
            <person name="Johnson J."/>
            <person name="Le Bouguenec C."/>
            <person name="Lescat M."/>
            <person name="Mangenot S."/>
            <person name="Martinez-Jehanne V."/>
            <person name="Matic I."/>
            <person name="Nassif X."/>
            <person name="Oztas S."/>
            <person name="Petit M.A."/>
            <person name="Pichon C."/>
            <person name="Rouy Z."/>
            <person name="Ruf C.S."/>
            <person name="Schneider D."/>
            <person name="Tourret J."/>
            <person name="Vacherie B."/>
            <person name="Vallenet D."/>
            <person name="Medigue C."/>
            <person name="Rocha E.P.C."/>
            <person name="Denamur E."/>
        </authorList>
    </citation>
    <scope>NUCLEOTIDE SEQUENCE [LARGE SCALE GENOMIC DNA]</scope>
    <source>
        <strain>55989 / EAEC</strain>
    </source>
</reference>
<proteinExistence type="inferred from homology"/>
<organism>
    <name type="scientific">Escherichia coli (strain 55989 / EAEC)</name>
    <dbReference type="NCBI Taxonomy" id="585055"/>
    <lineage>
        <taxon>Bacteria</taxon>
        <taxon>Pseudomonadati</taxon>
        <taxon>Pseudomonadota</taxon>
        <taxon>Gammaproteobacteria</taxon>
        <taxon>Enterobacterales</taxon>
        <taxon>Enterobacteriaceae</taxon>
        <taxon>Escherichia</taxon>
    </lineage>
</organism>
<dbReference type="EC" id="5.3.1.12" evidence="1"/>
<dbReference type="EMBL" id="CU928145">
    <property type="protein sequence ID" value="CAU99665.1"/>
    <property type="molecule type" value="Genomic_DNA"/>
</dbReference>
<dbReference type="RefSeq" id="WP_000187441.1">
    <property type="nucleotide sequence ID" value="NC_011748.1"/>
</dbReference>
<dbReference type="SMR" id="B7LH20"/>
<dbReference type="GeneID" id="75205101"/>
<dbReference type="KEGG" id="eck:EC55989_3506"/>
<dbReference type="HOGENOM" id="CLU_044465_1_0_6"/>
<dbReference type="UniPathway" id="UPA00246"/>
<dbReference type="Proteomes" id="UP000000746">
    <property type="component" value="Chromosome"/>
</dbReference>
<dbReference type="GO" id="GO:0008880">
    <property type="term" value="F:glucuronate isomerase activity"/>
    <property type="evidence" value="ECO:0007669"/>
    <property type="project" value="UniProtKB-UniRule"/>
</dbReference>
<dbReference type="GO" id="GO:0019698">
    <property type="term" value="P:D-galacturonate catabolic process"/>
    <property type="evidence" value="ECO:0007669"/>
    <property type="project" value="TreeGrafter"/>
</dbReference>
<dbReference type="GO" id="GO:0042840">
    <property type="term" value="P:D-glucuronate catabolic process"/>
    <property type="evidence" value="ECO:0007669"/>
    <property type="project" value="TreeGrafter"/>
</dbReference>
<dbReference type="FunFam" id="1.10.2020.10:FF:000001">
    <property type="entry name" value="Uronate isomerase"/>
    <property type="match status" value="1"/>
</dbReference>
<dbReference type="Gene3D" id="3.20.20.140">
    <property type="entry name" value="Metal-dependent hydrolases"/>
    <property type="match status" value="1"/>
</dbReference>
<dbReference type="Gene3D" id="1.10.2020.10">
    <property type="entry name" value="uronate isomerase, domain 2, chain A"/>
    <property type="match status" value="1"/>
</dbReference>
<dbReference type="HAMAP" id="MF_00675">
    <property type="entry name" value="UxaC"/>
    <property type="match status" value="1"/>
</dbReference>
<dbReference type="InterPro" id="IPR032466">
    <property type="entry name" value="Metal_Hydrolase"/>
</dbReference>
<dbReference type="InterPro" id="IPR003766">
    <property type="entry name" value="Uronate_isomerase"/>
</dbReference>
<dbReference type="NCBIfam" id="NF002794">
    <property type="entry name" value="PRK02925.1"/>
    <property type="match status" value="1"/>
</dbReference>
<dbReference type="PANTHER" id="PTHR30068">
    <property type="entry name" value="URONATE ISOMERASE"/>
    <property type="match status" value="1"/>
</dbReference>
<dbReference type="PANTHER" id="PTHR30068:SF4">
    <property type="entry name" value="URONATE ISOMERASE"/>
    <property type="match status" value="1"/>
</dbReference>
<dbReference type="Pfam" id="PF02614">
    <property type="entry name" value="UxaC"/>
    <property type="match status" value="1"/>
</dbReference>
<dbReference type="SUPFAM" id="SSF51556">
    <property type="entry name" value="Metallo-dependent hydrolases"/>
    <property type="match status" value="1"/>
</dbReference>
<keyword id="KW-0413">Isomerase</keyword>
<keyword id="KW-1185">Reference proteome</keyword>
<comment type="catalytic activity">
    <reaction evidence="1">
        <text>D-glucuronate = D-fructuronate</text>
        <dbReference type="Rhea" id="RHEA:13049"/>
        <dbReference type="ChEBI" id="CHEBI:58720"/>
        <dbReference type="ChEBI" id="CHEBI:59863"/>
        <dbReference type="EC" id="5.3.1.12"/>
    </reaction>
</comment>
<comment type="catalytic activity">
    <reaction evidence="1">
        <text>aldehydo-D-galacturonate = keto-D-tagaturonate</text>
        <dbReference type="Rhea" id="RHEA:27702"/>
        <dbReference type="ChEBI" id="CHEBI:12952"/>
        <dbReference type="ChEBI" id="CHEBI:17886"/>
        <dbReference type="EC" id="5.3.1.12"/>
    </reaction>
</comment>
<comment type="pathway">
    <text evidence="1">Carbohydrate metabolism; pentose and glucuronate interconversion.</text>
</comment>
<comment type="similarity">
    <text evidence="1">Belongs to the metallo-dependent hydrolases superfamily. Uronate isomerase family.</text>
</comment>
<accession>B7LH20</accession>
<feature type="chain" id="PRO_1000147689" description="Uronate isomerase">
    <location>
        <begin position="1"/>
        <end position="470"/>
    </location>
</feature>
<evidence type="ECO:0000255" key="1">
    <source>
        <dbReference type="HAMAP-Rule" id="MF_00675"/>
    </source>
</evidence>
<protein>
    <recommendedName>
        <fullName evidence="1">Uronate isomerase</fullName>
        <ecNumber evidence="1">5.3.1.12</ecNumber>
    </recommendedName>
    <alternativeName>
        <fullName evidence="1">Glucuronate isomerase</fullName>
    </alternativeName>
    <alternativeName>
        <fullName evidence="1">Uronic isomerase</fullName>
    </alternativeName>
</protein>
<sequence>MTPFMTEDFLLDTEFARRLYHDYAKDQPIFDYHCHLPPQQIAEDYRFKNLYDIWLKGDHYKWRAMRTNGVAERLCTGDASDREKFDAWAATVPHTIGNPLYHWTHLELRRPFGITGKLLSPSTADEIWNECNELLAQDNFSARGIMQQMNVKMVGTTDDPIDSLEHHAEIAKDGSFTIKVLPSWRPDKAFNIEQATFNDYMAKLGEVSDTDIRRFADLQTALTKRLDHFAAHGCKVSDHALDVVMFAEANEAELDSILARRLAGEPLSEHEVAQFKTAVLVFLGAEYARRGWVQQYHIGALRNNNLRQFKLLGPDVGFDSINDRPMAEELSKLLSKQNEENLLPKTILYCLNPRDNEVLGTMIGNFQGEGMPGKMQFGSGWWFNDQKDGMERQMTQLAQLGLLSRFVGMLTDSRSFLSYTRHEYFRRILCQMIGRWVEAGEAPADINLLGEMVKNICFNNARDYFAIELN</sequence>
<gene>
    <name evidence="1" type="primary">uxaC</name>
    <name type="ordered locus">EC55989_3506</name>
</gene>
<name>UXAC_ECO55</name>